<gene>
    <name evidence="1" type="primary">dsdA</name>
    <name type="ordered locus">SSON_2457</name>
</gene>
<dbReference type="EC" id="4.3.1.18" evidence="1"/>
<dbReference type="EMBL" id="CP000038">
    <property type="protein sequence ID" value="AAZ89098.1"/>
    <property type="molecule type" value="Genomic_DNA"/>
</dbReference>
<dbReference type="RefSeq" id="WP_000426408.1">
    <property type="nucleotide sequence ID" value="NC_007384.1"/>
</dbReference>
<dbReference type="SMR" id="Q3YZG4"/>
<dbReference type="GeneID" id="93774763"/>
<dbReference type="KEGG" id="ssn:SSON_2457"/>
<dbReference type="HOGENOM" id="CLU_035707_0_0_6"/>
<dbReference type="Proteomes" id="UP000002529">
    <property type="component" value="Chromosome"/>
</dbReference>
<dbReference type="GO" id="GO:0008721">
    <property type="term" value="F:D-serine ammonia-lyase activity"/>
    <property type="evidence" value="ECO:0007669"/>
    <property type="project" value="UniProtKB-EC"/>
</dbReference>
<dbReference type="GO" id="GO:0016836">
    <property type="term" value="F:hydro-lyase activity"/>
    <property type="evidence" value="ECO:0007669"/>
    <property type="project" value="UniProtKB-UniRule"/>
</dbReference>
<dbReference type="GO" id="GO:0030170">
    <property type="term" value="F:pyridoxal phosphate binding"/>
    <property type="evidence" value="ECO:0007669"/>
    <property type="project" value="InterPro"/>
</dbReference>
<dbReference type="GO" id="GO:0036088">
    <property type="term" value="P:D-serine catabolic process"/>
    <property type="evidence" value="ECO:0007669"/>
    <property type="project" value="TreeGrafter"/>
</dbReference>
<dbReference type="GO" id="GO:0009097">
    <property type="term" value="P:isoleucine biosynthetic process"/>
    <property type="evidence" value="ECO:0007669"/>
    <property type="project" value="TreeGrafter"/>
</dbReference>
<dbReference type="CDD" id="cd06447">
    <property type="entry name" value="D-Ser-dehyd"/>
    <property type="match status" value="1"/>
</dbReference>
<dbReference type="FunFam" id="3.40.50.1100:FF:000018">
    <property type="entry name" value="D-serine dehydratase"/>
    <property type="match status" value="1"/>
</dbReference>
<dbReference type="Gene3D" id="3.40.50.1100">
    <property type="match status" value="2"/>
</dbReference>
<dbReference type="HAMAP" id="MF_01030">
    <property type="entry name" value="D_Ser_dehydrat"/>
    <property type="match status" value="1"/>
</dbReference>
<dbReference type="InterPro" id="IPR011780">
    <property type="entry name" value="D_Ser_am_lyase"/>
</dbReference>
<dbReference type="InterPro" id="IPR050147">
    <property type="entry name" value="Ser/Thr_Dehydratase"/>
</dbReference>
<dbReference type="InterPro" id="IPR000634">
    <property type="entry name" value="Ser/Thr_deHydtase_PyrdxlP-BS"/>
</dbReference>
<dbReference type="InterPro" id="IPR001926">
    <property type="entry name" value="TrpB-like_PALP"/>
</dbReference>
<dbReference type="InterPro" id="IPR036052">
    <property type="entry name" value="TrpB-like_PALP_sf"/>
</dbReference>
<dbReference type="NCBIfam" id="TIGR02035">
    <property type="entry name" value="D_Ser_am_lyase"/>
    <property type="match status" value="1"/>
</dbReference>
<dbReference type="NCBIfam" id="NF002823">
    <property type="entry name" value="PRK02991.1"/>
    <property type="match status" value="1"/>
</dbReference>
<dbReference type="PANTHER" id="PTHR48078:SF9">
    <property type="entry name" value="D-SERINE DEHYDRATASE"/>
    <property type="match status" value="1"/>
</dbReference>
<dbReference type="PANTHER" id="PTHR48078">
    <property type="entry name" value="THREONINE DEHYDRATASE, MITOCHONDRIAL-RELATED"/>
    <property type="match status" value="1"/>
</dbReference>
<dbReference type="Pfam" id="PF00291">
    <property type="entry name" value="PALP"/>
    <property type="match status" value="1"/>
</dbReference>
<dbReference type="SUPFAM" id="SSF53686">
    <property type="entry name" value="Tryptophan synthase beta subunit-like PLP-dependent enzymes"/>
    <property type="match status" value="1"/>
</dbReference>
<dbReference type="PROSITE" id="PS00165">
    <property type="entry name" value="DEHYDRATASE_SER_THR"/>
    <property type="match status" value="1"/>
</dbReference>
<name>SDHD_SHISS</name>
<protein>
    <recommendedName>
        <fullName evidence="1">D-serine dehydratase</fullName>
        <ecNumber evidence="1">4.3.1.18</ecNumber>
    </recommendedName>
    <alternativeName>
        <fullName evidence="1">D-serine deaminase</fullName>
        <shortName evidence="1">DSD</shortName>
    </alternativeName>
</protein>
<reference key="1">
    <citation type="journal article" date="2005" name="Nucleic Acids Res.">
        <title>Genome dynamics and diversity of Shigella species, the etiologic agents of bacillary dysentery.</title>
        <authorList>
            <person name="Yang F."/>
            <person name="Yang J."/>
            <person name="Zhang X."/>
            <person name="Chen L."/>
            <person name="Jiang Y."/>
            <person name="Yan Y."/>
            <person name="Tang X."/>
            <person name="Wang J."/>
            <person name="Xiong Z."/>
            <person name="Dong J."/>
            <person name="Xue Y."/>
            <person name="Zhu Y."/>
            <person name="Xu X."/>
            <person name="Sun L."/>
            <person name="Chen S."/>
            <person name="Nie H."/>
            <person name="Peng J."/>
            <person name="Xu J."/>
            <person name="Wang Y."/>
            <person name="Yuan Z."/>
            <person name="Wen Y."/>
            <person name="Yao Z."/>
            <person name="Shen Y."/>
            <person name="Qiang B."/>
            <person name="Hou Y."/>
            <person name="Yu J."/>
            <person name="Jin Q."/>
        </authorList>
    </citation>
    <scope>NUCLEOTIDE SEQUENCE [LARGE SCALE GENOMIC DNA]</scope>
    <source>
        <strain>Ss046</strain>
    </source>
</reference>
<keyword id="KW-0456">Lyase</keyword>
<keyword id="KW-0663">Pyridoxal phosphate</keyword>
<keyword id="KW-1185">Reference proteome</keyword>
<sequence length="442" mass="47875">MENAKMNSLIAQYPLVKDLVALKETTWFNPGTTSLAEGLPYVGLTEQDVQDAHARLSRFAPYLAKAFAETAATGGIIESELVAIPAMQKRLEKEYQQPISGQLLLKKDSHLPISGSIKARGGIYEVLAHAEKLALEAGLLTLDDDYSKLLSPEFKQFFSQYSIAVGSTGNLGLSIGIMSARIGFKVTVHMSADARAWKKAKLRSHGVTVVEYEQDYGVAVEEGRKAAQSDPNCFFIDDENSRTLFLGYSVAGQRLKAQFAQQGRIVDADNPLFVYLPCGVGGGPGGVAFGLKLAFGDHVHCFFAEPTHSPCMLLGVHTGLHDQISVQDIGIDNLTAADGLAVGRASGFVGRAMERLLDGFYTLSDQTMYDMLGWLAQEEGIRLEPSALAGMAGPQRVCASVSYQQMHGFSAEQLRNTTHLVWATGGGMVPEEEMNQYLAKGR</sequence>
<proteinExistence type="inferred from homology"/>
<organism>
    <name type="scientific">Shigella sonnei (strain Ss046)</name>
    <dbReference type="NCBI Taxonomy" id="300269"/>
    <lineage>
        <taxon>Bacteria</taxon>
        <taxon>Pseudomonadati</taxon>
        <taxon>Pseudomonadota</taxon>
        <taxon>Gammaproteobacteria</taxon>
        <taxon>Enterobacterales</taxon>
        <taxon>Enterobacteriaceae</taxon>
        <taxon>Shigella</taxon>
    </lineage>
</organism>
<feature type="chain" id="PRO_0000291744" description="D-serine dehydratase">
    <location>
        <begin position="1"/>
        <end position="442"/>
    </location>
</feature>
<feature type="modified residue" description="N6-(pyridoxal phosphate)lysine" evidence="1">
    <location>
        <position position="118"/>
    </location>
</feature>
<evidence type="ECO:0000255" key="1">
    <source>
        <dbReference type="HAMAP-Rule" id="MF_01030"/>
    </source>
</evidence>
<comment type="catalytic activity">
    <reaction evidence="1">
        <text>D-serine = pyruvate + NH4(+)</text>
        <dbReference type="Rhea" id="RHEA:13977"/>
        <dbReference type="ChEBI" id="CHEBI:15361"/>
        <dbReference type="ChEBI" id="CHEBI:28938"/>
        <dbReference type="ChEBI" id="CHEBI:35247"/>
        <dbReference type="EC" id="4.3.1.18"/>
    </reaction>
</comment>
<comment type="cofactor">
    <cofactor evidence="1">
        <name>pyridoxal 5'-phosphate</name>
        <dbReference type="ChEBI" id="CHEBI:597326"/>
    </cofactor>
</comment>
<comment type="subunit">
    <text evidence="1">Monomer.</text>
</comment>
<comment type="similarity">
    <text evidence="1">Belongs to the serine/threonine dehydratase family. DsdA subfamily.</text>
</comment>
<accession>Q3YZG4</accession>